<protein>
    <recommendedName>
        <fullName>Riboflavin biosynthesis protein RibD</fullName>
    </recommendedName>
    <domain>
        <recommendedName>
            <fullName>Diaminohydroxyphosphoribosylaminopyrimidine deaminase</fullName>
            <shortName>DRAP deaminase</shortName>
            <ecNumber>3.5.4.26</ecNumber>
        </recommendedName>
        <alternativeName>
            <fullName>Riboflavin-specific deaminase</fullName>
        </alternativeName>
    </domain>
    <domain>
        <recommendedName>
            <fullName>5-amino-6-(5-phosphoribosylamino)uracil reductase</fullName>
            <ecNumber>1.1.1.193</ecNumber>
        </recommendedName>
        <alternativeName>
            <fullName>HTP reductase</fullName>
        </alternativeName>
    </domain>
</protein>
<sequence length="371" mass="40912">MEVSSEQQLFFMREAVALGERGRIFAPPNPWVGCVIVKNGCIIGRGWHKGIGSPHAEVCAFQDQTSSLVGADVYVTLEPCCHFGRTPPCVDLLIKSKVSSVYIALLDPDPRVCKRGVARLKEAGISVYVGIGHEEAKASLQPYLHQRETGLPWVVMKTAASLDGQTSDRRGISQWISGEQARLDVGRLRAESQAVIVGSRTVCLDNPRLSARMPSGDLYERQPLRVVVDSRGSVPLDARVWNPDSGNVLLATTEQCSKEHIQKLEDRGVEVWKSSPQQVDLKRLLQYLAEKGCLQVLVEGGARLHSAFWREHLVNAGVIYWGPKFLGDQGSPMLRDLQLCLDNAEHVKITKTFLVGDSVKTCFECVGREDG</sequence>
<name>RIBD_CHLMU</name>
<evidence type="ECO:0000250" key="1"/>
<evidence type="ECO:0000255" key="2">
    <source>
        <dbReference type="PROSITE-ProRule" id="PRU01083"/>
    </source>
</evidence>
<evidence type="ECO:0000305" key="3"/>
<keyword id="KW-0378">Hydrolase</keyword>
<keyword id="KW-0479">Metal-binding</keyword>
<keyword id="KW-0511">Multifunctional enzyme</keyword>
<keyword id="KW-0521">NADP</keyword>
<keyword id="KW-0560">Oxidoreductase</keyword>
<keyword id="KW-0686">Riboflavin biosynthesis</keyword>
<keyword id="KW-0862">Zinc</keyword>
<comment type="function">
    <text>Converts 2,5-diamino-6-(ribosylamino)-4(3h)-pyrimidinone 5'-phosphate into 5-amino-6-(ribosylamino)-2,4(1h,3h)-pyrimidinedione 5'-phosphate.</text>
</comment>
<comment type="catalytic activity">
    <reaction>
        <text>2,5-diamino-6-hydroxy-4-(5-phosphoribosylamino)-pyrimidine + H2O + H(+) = 5-amino-6-(5-phospho-D-ribosylamino)uracil + NH4(+)</text>
        <dbReference type="Rhea" id="RHEA:21868"/>
        <dbReference type="ChEBI" id="CHEBI:15377"/>
        <dbReference type="ChEBI" id="CHEBI:15378"/>
        <dbReference type="ChEBI" id="CHEBI:28938"/>
        <dbReference type="ChEBI" id="CHEBI:58453"/>
        <dbReference type="ChEBI" id="CHEBI:58614"/>
        <dbReference type="EC" id="3.5.4.26"/>
    </reaction>
</comment>
<comment type="catalytic activity">
    <reaction>
        <text>5-amino-6-(5-phospho-D-ribitylamino)uracil + NADP(+) = 5-amino-6-(5-phospho-D-ribosylamino)uracil + NADPH + H(+)</text>
        <dbReference type="Rhea" id="RHEA:17845"/>
        <dbReference type="ChEBI" id="CHEBI:15378"/>
        <dbReference type="ChEBI" id="CHEBI:57783"/>
        <dbReference type="ChEBI" id="CHEBI:58349"/>
        <dbReference type="ChEBI" id="CHEBI:58421"/>
        <dbReference type="ChEBI" id="CHEBI:58453"/>
        <dbReference type="EC" id="1.1.1.193"/>
    </reaction>
</comment>
<comment type="cofactor">
    <cofactor evidence="1">
        <name>Zn(2+)</name>
        <dbReference type="ChEBI" id="CHEBI:29105"/>
    </cofactor>
    <text evidence="1">Binds 1 zinc ion.</text>
</comment>
<comment type="pathway">
    <text>Cofactor biosynthesis; riboflavin biosynthesis; 5-amino-6-(D-ribitylamino)uracil from GTP: step 2/4.</text>
</comment>
<comment type="pathway">
    <text>Cofactor biosynthesis; riboflavin biosynthesis; 5-amino-6-(D-ribitylamino)uracil from GTP: step 3/4.</text>
</comment>
<comment type="similarity">
    <text evidence="3">In the N-terminal section; belongs to the cytidine and deoxycytidylate deaminase family.</text>
</comment>
<comment type="similarity">
    <text evidence="3">In the C-terminal section; belongs to the HTP reductase family.</text>
</comment>
<comment type="sequence caution" evidence="3">
    <conflict type="erroneous initiation">
        <sequence resource="EMBL-CDS" id="AAF38983"/>
    </conflict>
    <text>Extended N-terminus.</text>
</comment>
<feature type="chain" id="PRO_0000171717" description="Riboflavin biosynthesis protein RibD">
    <location>
        <begin position="1"/>
        <end position="371"/>
    </location>
</feature>
<feature type="domain" description="CMP/dCMP-type deaminase" evidence="2">
    <location>
        <begin position="6"/>
        <end position="128"/>
    </location>
</feature>
<feature type="region of interest" description="Deaminase">
    <location>
        <begin position="1"/>
        <end position="150"/>
    </location>
</feature>
<feature type="region of interest" description="Reductase">
    <location>
        <begin position="151"/>
        <end position="371"/>
    </location>
</feature>
<feature type="active site" description="Proton donor" evidence="1">
    <location>
        <position position="57"/>
    </location>
</feature>
<feature type="binding site" evidence="1">
    <location>
        <position position="55"/>
    </location>
    <ligand>
        <name>Zn(2+)</name>
        <dbReference type="ChEBI" id="CHEBI:29105"/>
        <note>catalytic</note>
    </ligand>
</feature>
<feature type="binding site" evidence="1">
    <location>
        <position position="80"/>
    </location>
    <ligand>
        <name>Zn(2+)</name>
        <dbReference type="ChEBI" id="CHEBI:29105"/>
        <note>catalytic</note>
    </ligand>
</feature>
<feature type="binding site" evidence="1">
    <location>
        <position position="89"/>
    </location>
    <ligand>
        <name>Zn(2+)</name>
        <dbReference type="ChEBI" id="CHEBI:29105"/>
        <note>catalytic</note>
    </ligand>
</feature>
<feature type="binding site" evidence="1">
    <location>
        <position position="159"/>
    </location>
    <ligand>
        <name>NADP(+)</name>
        <dbReference type="ChEBI" id="CHEBI:58349"/>
    </ligand>
</feature>
<feature type="binding site" evidence="1">
    <location>
        <position position="173"/>
    </location>
    <ligand>
        <name>substrate</name>
    </ligand>
</feature>
<feature type="binding site" evidence="1">
    <location>
        <position position="175"/>
    </location>
    <ligand>
        <name>NADP(+)</name>
        <dbReference type="ChEBI" id="CHEBI:58349"/>
    </ligand>
</feature>
<feature type="binding site" evidence="1">
    <location>
        <position position="189"/>
    </location>
    <ligand>
        <name>substrate</name>
    </ligand>
</feature>
<feature type="binding site" evidence="1">
    <location>
        <position position="201"/>
    </location>
    <ligand>
        <name>NADP(+)</name>
        <dbReference type="ChEBI" id="CHEBI:58349"/>
    </ligand>
</feature>
<feature type="binding site" evidence="1">
    <location>
        <position position="205"/>
    </location>
    <ligand>
        <name>NADP(+)</name>
        <dbReference type="ChEBI" id="CHEBI:58349"/>
    </ligand>
</feature>
<feature type="binding site" evidence="1">
    <location>
        <position position="209"/>
    </location>
    <ligand>
        <name>substrate</name>
    </ligand>
</feature>
<feature type="binding site" evidence="1">
    <location>
        <position position="212"/>
    </location>
    <ligand>
        <name>substrate</name>
    </ligand>
</feature>
<feature type="binding site" evidence="1">
    <location>
        <position position="230"/>
    </location>
    <ligand>
        <name>NADP(+)</name>
        <dbReference type="ChEBI" id="CHEBI:58349"/>
    </ligand>
</feature>
<feature type="binding site" evidence="1">
    <location>
        <position position="299"/>
    </location>
    <ligand>
        <name>substrate</name>
    </ligand>
</feature>
<feature type="binding site" evidence="1">
    <location>
        <begin position="301"/>
        <end position="307"/>
    </location>
    <ligand>
        <name>NADP(+)</name>
        <dbReference type="ChEBI" id="CHEBI:58349"/>
    </ligand>
</feature>
<proteinExistence type="inferred from homology"/>
<dbReference type="EC" id="3.5.4.26"/>
<dbReference type="EC" id="1.1.1.193"/>
<dbReference type="EMBL" id="AE002160">
    <property type="protein sequence ID" value="AAF38983.1"/>
    <property type="status" value="ALT_INIT"/>
    <property type="molecule type" value="Genomic_DNA"/>
</dbReference>
<dbReference type="PIR" id="D81742">
    <property type="entry name" value="D81742"/>
</dbReference>
<dbReference type="RefSeq" id="WP_010229380.1">
    <property type="nucleotide sequence ID" value="NZ_CP063055.1"/>
</dbReference>
<dbReference type="SMR" id="Q9PLJ6"/>
<dbReference type="GeneID" id="1245633"/>
<dbReference type="KEGG" id="cmu:TC_0103"/>
<dbReference type="eggNOG" id="COG0117">
    <property type="taxonomic scope" value="Bacteria"/>
</dbReference>
<dbReference type="eggNOG" id="COG1985">
    <property type="taxonomic scope" value="Bacteria"/>
</dbReference>
<dbReference type="HOGENOM" id="CLU_036590_1_2_0"/>
<dbReference type="OrthoDB" id="9800865at2"/>
<dbReference type="UniPathway" id="UPA00275">
    <property type="reaction ID" value="UER00401"/>
</dbReference>
<dbReference type="UniPathway" id="UPA00275">
    <property type="reaction ID" value="UER00402"/>
</dbReference>
<dbReference type="Proteomes" id="UP000000800">
    <property type="component" value="Chromosome"/>
</dbReference>
<dbReference type="GO" id="GO:0008703">
    <property type="term" value="F:5-amino-6-(5-phosphoribosylamino)uracil reductase activity"/>
    <property type="evidence" value="ECO:0007669"/>
    <property type="project" value="UniProtKB-EC"/>
</dbReference>
<dbReference type="GO" id="GO:0008835">
    <property type="term" value="F:diaminohydroxyphosphoribosylaminopyrimidine deaminase activity"/>
    <property type="evidence" value="ECO:0007669"/>
    <property type="project" value="UniProtKB-EC"/>
</dbReference>
<dbReference type="GO" id="GO:0046872">
    <property type="term" value="F:metal ion binding"/>
    <property type="evidence" value="ECO:0007669"/>
    <property type="project" value="UniProtKB-KW"/>
</dbReference>
<dbReference type="GO" id="GO:0050661">
    <property type="term" value="F:NADP binding"/>
    <property type="evidence" value="ECO:0007669"/>
    <property type="project" value="InterPro"/>
</dbReference>
<dbReference type="GO" id="GO:0009231">
    <property type="term" value="P:riboflavin biosynthetic process"/>
    <property type="evidence" value="ECO:0007669"/>
    <property type="project" value="UniProtKB-UniPathway"/>
</dbReference>
<dbReference type="CDD" id="cd01284">
    <property type="entry name" value="Riboflavin_deaminase-reductase"/>
    <property type="match status" value="1"/>
</dbReference>
<dbReference type="Gene3D" id="3.40.140.10">
    <property type="entry name" value="Cytidine Deaminase, domain 2"/>
    <property type="match status" value="1"/>
</dbReference>
<dbReference type="Gene3D" id="3.40.430.10">
    <property type="entry name" value="Dihydrofolate Reductase, subunit A"/>
    <property type="match status" value="1"/>
</dbReference>
<dbReference type="InterPro" id="IPR002125">
    <property type="entry name" value="CMP_dCMP_dom"/>
</dbReference>
<dbReference type="InterPro" id="IPR016193">
    <property type="entry name" value="Cytidine_deaminase-like"/>
</dbReference>
<dbReference type="InterPro" id="IPR024072">
    <property type="entry name" value="DHFR-like_dom_sf"/>
</dbReference>
<dbReference type="InterPro" id="IPR004794">
    <property type="entry name" value="Eubact_RibD"/>
</dbReference>
<dbReference type="InterPro" id="IPR011549">
    <property type="entry name" value="RibD_C"/>
</dbReference>
<dbReference type="InterPro" id="IPR002734">
    <property type="entry name" value="RibDG_C"/>
</dbReference>
<dbReference type="InterPro" id="IPR050765">
    <property type="entry name" value="Riboflavin_Biosynth_HTPR"/>
</dbReference>
<dbReference type="NCBIfam" id="TIGR00326">
    <property type="entry name" value="eubact_ribD"/>
    <property type="match status" value="1"/>
</dbReference>
<dbReference type="NCBIfam" id="TIGR00227">
    <property type="entry name" value="ribD_Cterm"/>
    <property type="match status" value="1"/>
</dbReference>
<dbReference type="PANTHER" id="PTHR38011:SF7">
    <property type="entry name" value="2,5-DIAMINO-6-RIBOSYLAMINO-4(3H)-PYRIMIDINONE 5'-PHOSPHATE REDUCTASE"/>
    <property type="match status" value="1"/>
</dbReference>
<dbReference type="PANTHER" id="PTHR38011">
    <property type="entry name" value="DIHYDROFOLATE REDUCTASE FAMILY PROTEIN (AFU_ORTHOLOGUE AFUA_8G06820)"/>
    <property type="match status" value="1"/>
</dbReference>
<dbReference type="Pfam" id="PF00383">
    <property type="entry name" value="dCMP_cyt_deam_1"/>
    <property type="match status" value="1"/>
</dbReference>
<dbReference type="Pfam" id="PF01872">
    <property type="entry name" value="RibD_C"/>
    <property type="match status" value="1"/>
</dbReference>
<dbReference type="PIRSF" id="PIRSF006769">
    <property type="entry name" value="RibD"/>
    <property type="match status" value="1"/>
</dbReference>
<dbReference type="SUPFAM" id="SSF53927">
    <property type="entry name" value="Cytidine deaminase-like"/>
    <property type="match status" value="1"/>
</dbReference>
<dbReference type="SUPFAM" id="SSF53597">
    <property type="entry name" value="Dihydrofolate reductase-like"/>
    <property type="match status" value="1"/>
</dbReference>
<dbReference type="PROSITE" id="PS51747">
    <property type="entry name" value="CYT_DCMP_DEAMINASES_2"/>
    <property type="match status" value="1"/>
</dbReference>
<reference key="1">
    <citation type="journal article" date="2000" name="Nucleic Acids Res.">
        <title>Genome sequences of Chlamydia trachomatis MoPn and Chlamydia pneumoniae AR39.</title>
        <authorList>
            <person name="Read T.D."/>
            <person name="Brunham R.C."/>
            <person name="Shen C."/>
            <person name="Gill S.R."/>
            <person name="Heidelberg J.F."/>
            <person name="White O."/>
            <person name="Hickey E.K."/>
            <person name="Peterson J.D."/>
            <person name="Utterback T.R."/>
            <person name="Berry K.J."/>
            <person name="Bass S."/>
            <person name="Linher K.D."/>
            <person name="Weidman J.F."/>
            <person name="Khouri H.M."/>
            <person name="Craven B."/>
            <person name="Bowman C."/>
            <person name="Dodson R.J."/>
            <person name="Gwinn M.L."/>
            <person name="Nelson W.C."/>
            <person name="DeBoy R.T."/>
            <person name="Kolonay J.F."/>
            <person name="McClarty G."/>
            <person name="Salzberg S.L."/>
            <person name="Eisen J.A."/>
            <person name="Fraser C.M."/>
        </authorList>
    </citation>
    <scope>NUCLEOTIDE SEQUENCE [LARGE SCALE GENOMIC DNA]</scope>
    <source>
        <strain>MoPn / Nigg</strain>
    </source>
</reference>
<organism>
    <name type="scientific">Chlamydia muridarum (strain MoPn / Nigg)</name>
    <dbReference type="NCBI Taxonomy" id="243161"/>
    <lineage>
        <taxon>Bacteria</taxon>
        <taxon>Pseudomonadati</taxon>
        <taxon>Chlamydiota</taxon>
        <taxon>Chlamydiia</taxon>
        <taxon>Chlamydiales</taxon>
        <taxon>Chlamydiaceae</taxon>
        <taxon>Chlamydia/Chlamydophila group</taxon>
        <taxon>Chlamydia</taxon>
    </lineage>
</organism>
<gene>
    <name type="primary">ribD</name>
    <name type="ordered locus">TC_0103</name>
</gene>
<accession>Q9PLJ6</accession>